<dbReference type="EC" id="3.6.4.-" evidence="1"/>
<dbReference type="EMBL" id="CH476607">
    <property type="protein sequence ID" value="EAU30543.1"/>
    <property type="molecule type" value="Genomic_DNA"/>
</dbReference>
<dbReference type="RefSeq" id="XP_001218028.1">
    <property type="nucleotide sequence ID" value="XM_001218027.1"/>
</dbReference>
<dbReference type="SMR" id="Q0CA78"/>
<dbReference type="STRING" id="341663.Q0CA78"/>
<dbReference type="EnsemblFungi" id="EAU30543">
    <property type="protein sequence ID" value="EAU30543"/>
    <property type="gene ID" value="ATEG_09406"/>
</dbReference>
<dbReference type="GeneID" id="4353733"/>
<dbReference type="VEuPathDB" id="FungiDB:ATEG_09406"/>
<dbReference type="eggNOG" id="KOG0388">
    <property type="taxonomic scope" value="Eukaryota"/>
</dbReference>
<dbReference type="HOGENOM" id="CLU_000315_26_0_1"/>
<dbReference type="OMA" id="NLLGFHC"/>
<dbReference type="OrthoDB" id="372624at2759"/>
<dbReference type="Proteomes" id="UP000007963">
    <property type="component" value="Unassembled WGS sequence"/>
</dbReference>
<dbReference type="GO" id="GO:0000775">
    <property type="term" value="C:chromosome, centromeric region"/>
    <property type="evidence" value="ECO:0007669"/>
    <property type="project" value="EnsemblFungi"/>
</dbReference>
<dbReference type="GO" id="GO:0000781">
    <property type="term" value="C:chromosome, telomeric region"/>
    <property type="evidence" value="ECO:0007669"/>
    <property type="project" value="GOC"/>
</dbReference>
<dbReference type="GO" id="GO:0031011">
    <property type="term" value="C:Ino80 complex"/>
    <property type="evidence" value="ECO:0007669"/>
    <property type="project" value="EnsemblFungi"/>
</dbReference>
<dbReference type="GO" id="GO:0005524">
    <property type="term" value="F:ATP binding"/>
    <property type="evidence" value="ECO:0007669"/>
    <property type="project" value="UniProtKB-KW"/>
</dbReference>
<dbReference type="GO" id="GO:0016887">
    <property type="term" value="F:ATP hydrolysis activity"/>
    <property type="evidence" value="ECO:0007669"/>
    <property type="project" value="EnsemblFungi"/>
</dbReference>
<dbReference type="GO" id="GO:0140658">
    <property type="term" value="F:ATP-dependent chromatin remodeler activity"/>
    <property type="evidence" value="ECO:0007669"/>
    <property type="project" value="InterPro"/>
</dbReference>
<dbReference type="GO" id="GO:0003677">
    <property type="term" value="F:DNA binding"/>
    <property type="evidence" value="ECO:0007669"/>
    <property type="project" value="UniProtKB-KW"/>
</dbReference>
<dbReference type="GO" id="GO:0042393">
    <property type="term" value="F:histone binding"/>
    <property type="evidence" value="ECO:0007669"/>
    <property type="project" value="TreeGrafter"/>
</dbReference>
<dbReference type="GO" id="GO:0034080">
    <property type="term" value="P:CENP-A containing chromatin assembly"/>
    <property type="evidence" value="ECO:0007669"/>
    <property type="project" value="EnsemblFungi"/>
</dbReference>
<dbReference type="GO" id="GO:0006281">
    <property type="term" value="P:DNA repair"/>
    <property type="evidence" value="ECO:0007669"/>
    <property type="project" value="UniProtKB-KW"/>
</dbReference>
<dbReference type="GO" id="GO:0045944">
    <property type="term" value="P:positive regulation of transcription by RNA polymerase II"/>
    <property type="evidence" value="ECO:0007669"/>
    <property type="project" value="EnsemblFungi"/>
</dbReference>
<dbReference type="GO" id="GO:0032006">
    <property type="term" value="P:regulation of TOR signaling"/>
    <property type="evidence" value="ECO:0007669"/>
    <property type="project" value="EnsemblFungi"/>
</dbReference>
<dbReference type="GO" id="GO:0031509">
    <property type="term" value="P:subtelomeric heterochromatin formation"/>
    <property type="evidence" value="ECO:0007669"/>
    <property type="project" value="EnsemblFungi"/>
</dbReference>
<dbReference type="GO" id="GO:0000722">
    <property type="term" value="P:telomere maintenance via recombination"/>
    <property type="evidence" value="ECO:0007669"/>
    <property type="project" value="EnsemblFungi"/>
</dbReference>
<dbReference type="GO" id="GO:0006366">
    <property type="term" value="P:transcription by RNA polymerase II"/>
    <property type="evidence" value="ECO:0007669"/>
    <property type="project" value="EnsemblFungi"/>
</dbReference>
<dbReference type="CDD" id="cd18002">
    <property type="entry name" value="DEXQc_INO80"/>
    <property type="match status" value="1"/>
</dbReference>
<dbReference type="CDD" id="cd18793">
    <property type="entry name" value="SF2_C_SNF"/>
    <property type="match status" value="1"/>
</dbReference>
<dbReference type="FunFam" id="3.40.50.10810:FF:000006">
    <property type="entry name" value="Putative DNA helicase INO80"/>
    <property type="match status" value="1"/>
</dbReference>
<dbReference type="FunFam" id="3.40.50.300:FF:001269">
    <property type="entry name" value="SNF2 family helicase/ATPase"/>
    <property type="match status" value="1"/>
</dbReference>
<dbReference type="Gene3D" id="3.40.50.300">
    <property type="entry name" value="P-loop containing nucleotide triphosphate hydrolases"/>
    <property type="match status" value="1"/>
</dbReference>
<dbReference type="Gene3D" id="3.40.50.10810">
    <property type="entry name" value="Tandem AAA-ATPase domain"/>
    <property type="match status" value="1"/>
</dbReference>
<dbReference type="InterPro" id="IPR020838">
    <property type="entry name" value="DBINO"/>
</dbReference>
<dbReference type="InterPro" id="IPR031047">
    <property type="entry name" value="DEXQc_INO80"/>
</dbReference>
<dbReference type="InterPro" id="IPR014001">
    <property type="entry name" value="Helicase_ATP-bd"/>
</dbReference>
<dbReference type="InterPro" id="IPR001650">
    <property type="entry name" value="Helicase_C-like"/>
</dbReference>
<dbReference type="InterPro" id="IPR050520">
    <property type="entry name" value="INO80/SWR1_helicase"/>
</dbReference>
<dbReference type="InterPro" id="IPR027417">
    <property type="entry name" value="P-loop_NTPase"/>
</dbReference>
<dbReference type="InterPro" id="IPR038718">
    <property type="entry name" value="SNF2-like_sf"/>
</dbReference>
<dbReference type="InterPro" id="IPR049730">
    <property type="entry name" value="SNF2/RAD54-like_C"/>
</dbReference>
<dbReference type="InterPro" id="IPR000330">
    <property type="entry name" value="SNF2_N"/>
</dbReference>
<dbReference type="PANTHER" id="PTHR45685:SF2">
    <property type="entry name" value="CHROMATIN-REMODELING ATPASE INO80"/>
    <property type="match status" value="1"/>
</dbReference>
<dbReference type="PANTHER" id="PTHR45685">
    <property type="entry name" value="HELICASE SRCAP-RELATED"/>
    <property type="match status" value="1"/>
</dbReference>
<dbReference type="Pfam" id="PF13892">
    <property type="entry name" value="DBINO"/>
    <property type="match status" value="1"/>
</dbReference>
<dbReference type="Pfam" id="PF00271">
    <property type="entry name" value="Helicase_C"/>
    <property type="match status" value="1"/>
</dbReference>
<dbReference type="Pfam" id="PF00176">
    <property type="entry name" value="SNF2-rel_dom"/>
    <property type="match status" value="1"/>
</dbReference>
<dbReference type="SMART" id="SM00487">
    <property type="entry name" value="DEXDc"/>
    <property type="match status" value="1"/>
</dbReference>
<dbReference type="SMART" id="SM00490">
    <property type="entry name" value="HELICc"/>
    <property type="match status" value="1"/>
</dbReference>
<dbReference type="SUPFAM" id="SSF52540">
    <property type="entry name" value="P-loop containing nucleoside triphosphate hydrolases"/>
    <property type="match status" value="2"/>
</dbReference>
<dbReference type="PROSITE" id="PS51413">
    <property type="entry name" value="DBINO"/>
    <property type="match status" value="1"/>
</dbReference>
<dbReference type="PROSITE" id="PS51192">
    <property type="entry name" value="HELICASE_ATP_BIND_1"/>
    <property type="match status" value="1"/>
</dbReference>
<dbReference type="PROSITE" id="PS51194">
    <property type="entry name" value="HELICASE_CTER"/>
    <property type="match status" value="1"/>
</dbReference>
<feature type="chain" id="PRO_0000350957" description="Chromatin-remodeling ATPase INO80">
    <location>
        <begin position="1"/>
        <end position="1690"/>
    </location>
</feature>
<feature type="domain" description="DBINO" evidence="6">
    <location>
        <begin position="581"/>
        <end position="706"/>
    </location>
</feature>
<feature type="domain" description="Helicase ATP-binding" evidence="4">
    <location>
        <begin position="830"/>
        <end position="1002"/>
    </location>
</feature>
<feature type="domain" description="Helicase C-terminal" evidence="5">
    <location>
        <begin position="1403"/>
        <end position="1563"/>
    </location>
</feature>
<feature type="region of interest" description="Disordered" evidence="7">
    <location>
        <begin position="1"/>
        <end position="306"/>
    </location>
</feature>
<feature type="region of interest" description="Disordered" evidence="7">
    <location>
        <begin position="395"/>
        <end position="527"/>
    </location>
</feature>
<feature type="region of interest" description="Disordered" evidence="7">
    <location>
        <begin position="618"/>
        <end position="637"/>
    </location>
</feature>
<feature type="region of interest" description="Disordered" evidence="7">
    <location>
        <begin position="1619"/>
        <end position="1690"/>
    </location>
</feature>
<feature type="coiled-coil region" evidence="3">
    <location>
        <begin position="392"/>
        <end position="468"/>
    </location>
</feature>
<feature type="coiled-coil region" evidence="3">
    <location>
        <begin position="623"/>
        <end position="694"/>
    </location>
</feature>
<feature type="short sequence motif" description="DEAQ box">
    <location>
        <begin position="953"/>
        <end position="956"/>
    </location>
</feature>
<feature type="compositionally biased region" description="Polar residues" evidence="7">
    <location>
        <begin position="30"/>
        <end position="41"/>
    </location>
</feature>
<feature type="compositionally biased region" description="Polar residues" evidence="7">
    <location>
        <begin position="111"/>
        <end position="127"/>
    </location>
</feature>
<feature type="compositionally biased region" description="Low complexity" evidence="7">
    <location>
        <begin position="213"/>
        <end position="227"/>
    </location>
</feature>
<feature type="compositionally biased region" description="Basic and acidic residues" evidence="7">
    <location>
        <begin position="253"/>
        <end position="273"/>
    </location>
</feature>
<feature type="compositionally biased region" description="Basic and acidic residues" evidence="7">
    <location>
        <begin position="395"/>
        <end position="407"/>
    </location>
</feature>
<feature type="compositionally biased region" description="Basic and acidic residues" evidence="7">
    <location>
        <begin position="416"/>
        <end position="453"/>
    </location>
</feature>
<feature type="compositionally biased region" description="Basic and acidic residues" evidence="7">
    <location>
        <begin position="513"/>
        <end position="524"/>
    </location>
</feature>
<feature type="compositionally biased region" description="Basic and acidic residues" evidence="7">
    <location>
        <begin position="621"/>
        <end position="635"/>
    </location>
</feature>
<feature type="compositionally biased region" description="Basic residues" evidence="7">
    <location>
        <begin position="1656"/>
        <end position="1672"/>
    </location>
</feature>
<feature type="compositionally biased region" description="Basic and acidic residues" evidence="7">
    <location>
        <begin position="1673"/>
        <end position="1682"/>
    </location>
</feature>
<feature type="binding site" evidence="4">
    <location>
        <begin position="843"/>
        <end position="850"/>
    </location>
    <ligand>
        <name>ATP</name>
        <dbReference type="ChEBI" id="CHEBI:30616"/>
    </ligand>
</feature>
<accession>Q0CA78</accession>
<sequence>MSGAPPYNPQSPTQQSRYPVYSPPNKNRPFYSNNDQYQQHPPHTPPAYPSQPAAMSRSPHHPHAQSPLPGTLPPLNGAAPPPHHPDASSQFQPHAAAGTPQYSLPRPYSGSVLSSNGTTPYGPSTASHAHPSARPDGPPHLSPKKEMEPSFSMGSHGVPGYPPSAMREPRLASPPKEVKPARAADPMSFASILSGPTEDRPPPRKPSPPEVAPAPLALAPASAARQSPPLPISARAPPLSKEPEPAPVTPLPRLEKKPSSEKRRRNVDQEPKMGELSVPPTNGLLDPAKAAVQPRAPPRKTLSERETEYINRVMAELDSMEKSDVESPGFEWELERYTAKGKKRAMDAERAESVRRKRRRHDFLIKLGKTFEKQASAGMDRFRMANESSVVAEVQAKEVQDEKERKKDMQRKRRRENTVRLEMQKKLEAERKANKAQDSAEKAKFLREAERAQRKIKTTKRALEGVTAPEEIGEVTPLAPNLEGGTTSSFHIGRSPSRRKSGRGGPVTRPKKSKEQKQAEKDAAEAAYAALENEELLPLAPRDDRKDVLRKDGKGVLSKEATPIPLSSYESKGYNQIYEQIWRDIARKDIPKVYRIKVLSLSTRQENLRKTAQLASKQSRKWQERTNKSMKDTQARAKRTMREMMSFWKRNEREERDLRRLAEKQEIESAKKAEAEREANRQRRKLNFLISQTELYSHFIGRKIKGAEGDESGDTAVEGANEAAQSKMDVPAGALKAGAGVTNFEDLDFDAEDETALQQAAMANAQNAVQQAQDRARAFNNTKDDPMAAMDEGELNFQNPTSLGDIEISQPSMLTAKLKEYQLKGLNWLVNLYEQGINGILADEMGLGKTIQSISVMAYLAEVHNIWGPFLVIAPASTLHNWQQEITKFVPDIKVLPYWGSAKDRKILRKFWDRKHITYTKESEFHVLVTSYQLVVLDAQYFQKVKWQYMILDEAQAIKSSQSSRWKNLLGFHCRNRLLLTGTPIQNNMQELWALLHFIMPTLFDSHDEFSEWFSKDIESHAQSNTKLNEDQLKRLHMILKPFMLRRVKKHVQQELGDKVEKDVFCDLTYRQRAYYTGLRDRVSIMDLIEKAAVGDEADSTTLMNLVMQFRKVCNHPDLFERAETKSPLTTAYFAETASFVREGQFVDVGYSTRSLIEYPLPRLLCSSAGRVDVAGPDNLHAGFRGKYLAHMMNVFAPENIKQSIQEDGAFSFLRFIDTSMGDAYEQSHRGVFERALSRRGQPNRLSRLNVVYEEDEGDAPLAHTMLNIVARNDQSAVHEITPDGYMRELMTVSQSTFEREGLNVIEPCASPAASAPPVTITSSSPAAQIEMSDALFNVPVRHALFSTPTRQLEEQILEKKLDPVPYSHPPMLPKPTSLKGRYTHIEVPSMRRFVTDSGKLAKLDELLRELKAGGHRVLLYFQMTRMIDLMEEYLTYRNYKYCRLDGSTKLEDRRDTVADFQQRPEIFVFLLSTRAGGLGINLTAADTVIFYDSDWNPTIDSQAMDRAHRLGQTRQVTVYRLITRGTIEERIRKRALQKEEVQRVVITGGAAGGVDFNTRNRESRTKDIAMWLADDEQAELIEQKEKEALDRGEVFGASKGGKKAAQKRKRDITLDDMYHEGEGNFDDASAKPSGAATPVSTADVGGTPSSTPVPKRGRGRGTGKGTSKRAKTTKERLRLIDGDGGLGPM</sequence>
<gene>
    <name type="primary">ino80</name>
    <name type="ORF">ATEG_09406</name>
</gene>
<comment type="function">
    <text evidence="6">ATPase component of the INO80 complex which remodels chromatin by shifting nucleosomes and is involved in DNA repair.</text>
</comment>
<comment type="catalytic activity">
    <reaction evidence="1">
        <text>ATP + H2O = ADP + phosphate + H(+)</text>
        <dbReference type="Rhea" id="RHEA:13065"/>
        <dbReference type="ChEBI" id="CHEBI:15377"/>
        <dbReference type="ChEBI" id="CHEBI:15378"/>
        <dbReference type="ChEBI" id="CHEBI:30616"/>
        <dbReference type="ChEBI" id="CHEBI:43474"/>
        <dbReference type="ChEBI" id="CHEBI:456216"/>
    </reaction>
</comment>
<comment type="subunit">
    <text evidence="6">Component of the INO80 chromatin-remodeling complex.</text>
</comment>
<comment type="subcellular location">
    <subcellularLocation>
        <location evidence="6">Nucleus</location>
    </subcellularLocation>
</comment>
<comment type="domain">
    <text evidence="2">The DBINO region is involved in binding to DNA.</text>
</comment>
<comment type="similarity">
    <text evidence="8">Belongs to the SNF2/RAD54 helicase family.</text>
</comment>
<name>INO80_ASPTN</name>
<evidence type="ECO:0000250" key="1">
    <source>
        <dbReference type="UniProtKB" id="P53115"/>
    </source>
</evidence>
<evidence type="ECO:0000250" key="2">
    <source>
        <dbReference type="UniProtKB" id="Q9ULG1"/>
    </source>
</evidence>
<evidence type="ECO:0000255" key="3"/>
<evidence type="ECO:0000255" key="4">
    <source>
        <dbReference type="PROSITE-ProRule" id="PRU00541"/>
    </source>
</evidence>
<evidence type="ECO:0000255" key="5">
    <source>
        <dbReference type="PROSITE-ProRule" id="PRU00542"/>
    </source>
</evidence>
<evidence type="ECO:0000255" key="6">
    <source>
        <dbReference type="PROSITE-ProRule" id="PRU00746"/>
    </source>
</evidence>
<evidence type="ECO:0000256" key="7">
    <source>
        <dbReference type="SAM" id="MobiDB-lite"/>
    </source>
</evidence>
<evidence type="ECO:0000305" key="8"/>
<organism>
    <name type="scientific">Aspergillus terreus (strain NIH 2624 / FGSC A1156)</name>
    <dbReference type="NCBI Taxonomy" id="341663"/>
    <lineage>
        <taxon>Eukaryota</taxon>
        <taxon>Fungi</taxon>
        <taxon>Dikarya</taxon>
        <taxon>Ascomycota</taxon>
        <taxon>Pezizomycotina</taxon>
        <taxon>Eurotiomycetes</taxon>
        <taxon>Eurotiomycetidae</taxon>
        <taxon>Eurotiales</taxon>
        <taxon>Aspergillaceae</taxon>
        <taxon>Aspergillus</taxon>
        <taxon>Aspergillus subgen. Circumdati</taxon>
    </lineage>
</organism>
<protein>
    <recommendedName>
        <fullName evidence="1">Chromatin-remodeling ATPase INO80</fullName>
        <ecNumber evidence="1">3.6.4.-</ecNumber>
    </recommendedName>
</protein>
<proteinExistence type="inferred from homology"/>
<reference key="1">
    <citation type="submission" date="2005-09" db="EMBL/GenBank/DDBJ databases">
        <title>Annotation of the Aspergillus terreus NIH2624 genome.</title>
        <authorList>
            <person name="Birren B.W."/>
            <person name="Lander E.S."/>
            <person name="Galagan J.E."/>
            <person name="Nusbaum C."/>
            <person name="Devon K."/>
            <person name="Henn M."/>
            <person name="Ma L.-J."/>
            <person name="Jaffe D.B."/>
            <person name="Butler J."/>
            <person name="Alvarez P."/>
            <person name="Gnerre S."/>
            <person name="Grabherr M."/>
            <person name="Kleber M."/>
            <person name="Mauceli E.W."/>
            <person name="Brockman W."/>
            <person name="Rounsley S."/>
            <person name="Young S.K."/>
            <person name="LaButti K."/>
            <person name="Pushparaj V."/>
            <person name="DeCaprio D."/>
            <person name="Crawford M."/>
            <person name="Koehrsen M."/>
            <person name="Engels R."/>
            <person name="Montgomery P."/>
            <person name="Pearson M."/>
            <person name="Howarth C."/>
            <person name="Larson L."/>
            <person name="Luoma S."/>
            <person name="White J."/>
            <person name="Alvarado L."/>
            <person name="Kodira C.D."/>
            <person name="Zeng Q."/>
            <person name="Oleary S."/>
            <person name="Yandava C."/>
            <person name="Denning D.W."/>
            <person name="Nierman W.C."/>
            <person name="Milne T."/>
            <person name="Madden K."/>
        </authorList>
    </citation>
    <scope>NUCLEOTIDE SEQUENCE [LARGE SCALE GENOMIC DNA]</scope>
    <source>
        <strain>NIH 2624 / FGSC A1156</strain>
    </source>
</reference>
<keyword id="KW-0010">Activator</keyword>
<keyword id="KW-0067">ATP-binding</keyword>
<keyword id="KW-0175">Coiled coil</keyword>
<keyword id="KW-0227">DNA damage</keyword>
<keyword id="KW-0234">DNA repair</keyword>
<keyword id="KW-0238">DNA-binding</keyword>
<keyword id="KW-0378">Hydrolase</keyword>
<keyword id="KW-0547">Nucleotide-binding</keyword>
<keyword id="KW-0539">Nucleus</keyword>
<keyword id="KW-1185">Reference proteome</keyword>
<keyword id="KW-0804">Transcription</keyword>
<keyword id="KW-0805">Transcription regulation</keyword>